<gene>
    <name evidence="3" type="primary">hsaG</name>
    <name type="ordered locus">Rv3535c</name>
</gene>
<feature type="chain" id="PRO_0000387688" description="Propanal dehydrogenase (CoA-propanoylating)">
    <location>
        <begin position="1"/>
        <end position="303"/>
    </location>
</feature>
<feature type="active site" description="Acyl-thioester intermediate" evidence="1">
    <location>
        <position position="127"/>
    </location>
</feature>
<feature type="binding site" evidence="1">
    <location>
        <begin position="12"/>
        <end position="15"/>
    </location>
    <ligand>
        <name>NAD(+)</name>
        <dbReference type="ChEBI" id="CHEBI:57540"/>
    </ligand>
</feature>
<feature type="binding site" evidence="1">
    <location>
        <begin position="158"/>
        <end position="166"/>
    </location>
    <ligand>
        <name>NAD(+)</name>
        <dbReference type="ChEBI" id="CHEBI:57540"/>
    </ligand>
</feature>
<feature type="binding site" evidence="1">
    <location>
        <position position="277"/>
    </location>
    <ligand>
        <name>NAD(+)</name>
        <dbReference type="ChEBI" id="CHEBI:57540"/>
    </ligand>
</feature>
<feature type="mutagenesis site" description="2200-fold decrease in catalytic efficiency with coenzyme A." evidence="2">
    <original>S</original>
    <variation>D</variation>
    <location>
        <position position="41"/>
    </location>
</feature>
<feature type="mutagenesis site" description="6600-fold decrease in catalytic efficiency with coenzyme A." evidence="2">
    <original>S</original>
    <variation>I</variation>
    <location>
        <position position="41"/>
    </location>
</feature>
<feature type="strand" evidence="6">
    <location>
        <begin position="5"/>
        <end position="10"/>
    </location>
</feature>
<feature type="helix" evidence="6">
    <location>
        <begin position="14"/>
        <end position="24"/>
    </location>
</feature>
<feature type="strand" evidence="6">
    <location>
        <begin position="27"/>
        <end position="35"/>
    </location>
</feature>
<feature type="helix" evidence="6">
    <location>
        <begin position="42"/>
        <end position="49"/>
    </location>
</feature>
<feature type="strand" evidence="6">
    <location>
        <begin position="53"/>
        <end position="57"/>
    </location>
</feature>
<feature type="helix" evidence="6">
    <location>
        <begin position="59"/>
        <end position="62"/>
    </location>
</feature>
<feature type="strand" evidence="6">
    <location>
        <begin position="70"/>
        <end position="74"/>
    </location>
</feature>
<feature type="helix" evidence="6">
    <location>
        <begin position="78"/>
        <end position="91"/>
    </location>
</feature>
<feature type="strand" evidence="6">
    <location>
        <begin position="94"/>
        <end position="97"/>
    </location>
</feature>
<feature type="helix" evidence="6">
    <location>
        <begin position="109"/>
        <end position="116"/>
    </location>
</feature>
<feature type="strand" evidence="6">
    <location>
        <begin position="120"/>
        <end position="123"/>
    </location>
</feature>
<feature type="helix" evidence="6">
    <location>
        <begin position="127"/>
        <end position="140"/>
    </location>
</feature>
<feature type="strand" evidence="6">
    <location>
        <begin position="148"/>
        <end position="155"/>
    </location>
</feature>
<feature type="helix" evidence="6">
    <location>
        <begin position="156"/>
        <end position="158"/>
    </location>
</feature>
<feature type="helix" evidence="6">
    <location>
        <begin position="161"/>
        <end position="165"/>
    </location>
</feature>
<feature type="helix" evidence="6">
    <location>
        <begin position="167"/>
        <end position="180"/>
    </location>
</feature>
<feature type="strand" evidence="6">
    <location>
        <begin position="185"/>
        <end position="194"/>
    </location>
</feature>
<feature type="strand" evidence="6">
    <location>
        <begin position="202"/>
        <end position="210"/>
    </location>
</feature>
<feature type="helix" evidence="6">
    <location>
        <begin position="216"/>
        <end position="231"/>
    </location>
</feature>
<feature type="strand" evidence="6">
    <location>
        <begin position="237"/>
        <end position="241"/>
    </location>
</feature>
<feature type="strand" evidence="6">
    <location>
        <begin position="244"/>
        <end position="246"/>
    </location>
</feature>
<feature type="turn" evidence="6">
    <location>
        <begin position="250"/>
        <end position="254"/>
    </location>
</feature>
<feature type="strand" evidence="6">
    <location>
        <begin position="256"/>
        <end position="264"/>
    </location>
</feature>
<feature type="strand" evidence="6">
    <location>
        <begin position="269"/>
        <end position="271"/>
    </location>
</feature>
<feature type="helix" evidence="6">
    <location>
        <begin position="276"/>
        <end position="295"/>
    </location>
</feature>
<evidence type="ECO:0000255" key="1">
    <source>
        <dbReference type="HAMAP-Rule" id="MF_01657"/>
    </source>
</evidence>
<evidence type="ECO:0000269" key="2">
    <source>
    </source>
</evidence>
<evidence type="ECO:0000303" key="3">
    <source>
    </source>
</evidence>
<evidence type="ECO:0000305" key="4"/>
<evidence type="ECO:0007744" key="5">
    <source>
        <dbReference type="PDB" id="4JN6"/>
    </source>
</evidence>
<evidence type="ECO:0007829" key="6">
    <source>
        <dbReference type="PDB" id="4JN6"/>
    </source>
</evidence>
<accession>P9WQH3</accession>
<accession>L0TEF0</accession>
<accession>P71866</accession>
<accession>Q7D5C3</accession>
<organism>
    <name type="scientific">Mycobacterium tuberculosis (strain ATCC 25618 / H37Rv)</name>
    <dbReference type="NCBI Taxonomy" id="83332"/>
    <lineage>
        <taxon>Bacteria</taxon>
        <taxon>Bacillati</taxon>
        <taxon>Actinomycetota</taxon>
        <taxon>Actinomycetes</taxon>
        <taxon>Mycobacteriales</taxon>
        <taxon>Mycobacteriaceae</taxon>
        <taxon>Mycobacterium</taxon>
        <taxon>Mycobacterium tuberculosis complex</taxon>
    </lineage>
</organism>
<dbReference type="EC" id="1.2.1.87" evidence="2"/>
<dbReference type="EC" id="1.2.1.10" evidence="1 2"/>
<dbReference type="EMBL" id="AL123456">
    <property type="protein sequence ID" value="CCP46357.1"/>
    <property type="molecule type" value="Genomic_DNA"/>
</dbReference>
<dbReference type="PIR" id="H70675">
    <property type="entry name" value="H70675"/>
</dbReference>
<dbReference type="RefSeq" id="NP_218052.1">
    <property type="nucleotide sequence ID" value="NC_000962.3"/>
</dbReference>
<dbReference type="RefSeq" id="WP_003419251.1">
    <property type="nucleotide sequence ID" value="NZ_NVQJ01000014.1"/>
</dbReference>
<dbReference type="PDB" id="4JN6">
    <property type="method" value="X-ray"/>
    <property type="resolution" value="1.93 A"/>
    <property type="chains" value="B/D=1-303"/>
</dbReference>
<dbReference type="PDBsum" id="4JN6"/>
<dbReference type="SMR" id="P9WQH3"/>
<dbReference type="FunCoup" id="P9WQH3">
    <property type="interactions" value="77"/>
</dbReference>
<dbReference type="STRING" id="83332.Rv3535c"/>
<dbReference type="SwissLipids" id="SLP:000001172"/>
<dbReference type="PaxDb" id="83332-Rv3535c"/>
<dbReference type="DNASU" id="888396"/>
<dbReference type="GeneID" id="888396"/>
<dbReference type="KEGG" id="mtu:Rv3535c"/>
<dbReference type="KEGG" id="mtv:RVBD_3535c"/>
<dbReference type="PATRIC" id="fig|83332.111.peg.3940"/>
<dbReference type="TubercuList" id="Rv3535c"/>
<dbReference type="eggNOG" id="COG4569">
    <property type="taxonomic scope" value="Bacteria"/>
</dbReference>
<dbReference type="InParanoid" id="P9WQH3"/>
<dbReference type="OrthoDB" id="9786743at2"/>
<dbReference type="PhylomeDB" id="P9WQH3"/>
<dbReference type="BioCyc" id="MetaCyc:G185E-7812-MONOMER"/>
<dbReference type="EvolutionaryTrace" id="P9WQH3"/>
<dbReference type="Proteomes" id="UP000001584">
    <property type="component" value="Chromosome"/>
</dbReference>
<dbReference type="GO" id="GO:0008774">
    <property type="term" value="F:acetaldehyde dehydrogenase (acetylating) activity"/>
    <property type="evidence" value="ECO:0007669"/>
    <property type="project" value="UniProtKB-UniRule"/>
</dbReference>
<dbReference type="GO" id="GO:0051287">
    <property type="term" value="F:NAD binding"/>
    <property type="evidence" value="ECO:0007669"/>
    <property type="project" value="UniProtKB-UniRule"/>
</dbReference>
<dbReference type="GO" id="GO:0009056">
    <property type="term" value="P:catabolic process"/>
    <property type="evidence" value="ECO:0007669"/>
    <property type="project" value="UniProtKB-KW"/>
</dbReference>
<dbReference type="CDD" id="cd23933">
    <property type="entry name" value="ALDH_C"/>
    <property type="match status" value="1"/>
</dbReference>
<dbReference type="Gene3D" id="3.30.360.10">
    <property type="entry name" value="Dihydrodipicolinate Reductase, domain 2"/>
    <property type="match status" value="1"/>
</dbReference>
<dbReference type="Gene3D" id="3.40.50.720">
    <property type="entry name" value="NAD(P)-binding Rossmann-like Domain"/>
    <property type="match status" value="1"/>
</dbReference>
<dbReference type="HAMAP" id="MF_01657">
    <property type="entry name" value="Ac_ald_DH_ac"/>
    <property type="match status" value="1"/>
</dbReference>
<dbReference type="InterPro" id="IPR003361">
    <property type="entry name" value="Acetaldehyde_dehydrogenase"/>
</dbReference>
<dbReference type="InterPro" id="IPR015426">
    <property type="entry name" value="Acetylaldehyde_DH_C"/>
</dbReference>
<dbReference type="InterPro" id="IPR036291">
    <property type="entry name" value="NAD(P)-bd_dom_sf"/>
</dbReference>
<dbReference type="InterPro" id="IPR000534">
    <property type="entry name" value="Semialdehyde_DH_NAD-bd"/>
</dbReference>
<dbReference type="NCBIfam" id="TIGR03215">
    <property type="entry name" value="ac_ald_DH_ac"/>
    <property type="match status" value="1"/>
</dbReference>
<dbReference type="NCBIfam" id="NF006157">
    <property type="entry name" value="PRK08300.1"/>
    <property type="match status" value="1"/>
</dbReference>
<dbReference type="Pfam" id="PF09290">
    <property type="entry name" value="AcetDehyd-dimer"/>
    <property type="match status" value="1"/>
</dbReference>
<dbReference type="Pfam" id="PF01118">
    <property type="entry name" value="Semialdhyde_dh"/>
    <property type="match status" value="1"/>
</dbReference>
<dbReference type="PIRSF" id="PIRSF015689">
    <property type="entry name" value="Actaldh_dh_actl"/>
    <property type="match status" value="1"/>
</dbReference>
<dbReference type="SMART" id="SM00859">
    <property type="entry name" value="Semialdhyde_dh"/>
    <property type="match status" value="1"/>
</dbReference>
<dbReference type="SUPFAM" id="SSF55347">
    <property type="entry name" value="Glyceraldehyde-3-phosphate dehydrogenase-like, C-terminal domain"/>
    <property type="match status" value="1"/>
</dbReference>
<dbReference type="SUPFAM" id="SSF51735">
    <property type="entry name" value="NAD(P)-binding Rossmann-fold domains"/>
    <property type="match status" value="1"/>
</dbReference>
<reference key="1">
    <citation type="journal article" date="1998" name="Nature">
        <title>Deciphering the biology of Mycobacterium tuberculosis from the complete genome sequence.</title>
        <authorList>
            <person name="Cole S.T."/>
            <person name="Brosch R."/>
            <person name="Parkhill J."/>
            <person name="Garnier T."/>
            <person name="Churcher C.M."/>
            <person name="Harris D.E."/>
            <person name="Gordon S.V."/>
            <person name="Eiglmeier K."/>
            <person name="Gas S."/>
            <person name="Barry C.E. III"/>
            <person name="Tekaia F."/>
            <person name="Badcock K."/>
            <person name="Basham D."/>
            <person name="Brown D."/>
            <person name="Chillingworth T."/>
            <person name="Connor R."/>
            <person name="Davies R.M."/>
            <person name="Devlin K."/>
            <person name="Feltwell T."/>
            <person name="Gentles S."/>
            <person name="Hamlin N."/>
            <person name="Holroyd S."/>
            <person name="Hornsby T."/>
            <person name="Jagels K."/>
            <person name="Krogh A."/>
            <person name="McLean J."/>
            <person name="Moule S."/>
            <person name="Murphy L.D."/>
            <person name="Oliver S."/>
            <person name="Osborne J."/>
            <person name="Quail M.A."/>
            <person name="Rajandream M.A."/>
            <person name="Rogers J."/>
            <person name="Rutter S."/>
            <person name="Seeger K."/>
            <person name="Skelton S."/>
            <person name="Squares S."/>
            <person name="Squares R."/>
            <person name="Sulston J.E."/>
            <person name="Taylor K."/>
            <person name="Whitehead S."/>
            <person name="Barrell B.G."/>
        </authorList>
    </citation>
    <scope>NUCLEOTIDE SEQUENCE [LARGE SCALE GENOMIC DNA]</scope>
    <source>
        <strain>ATCC 25618 / H37Rv</strain>
    </source>
</reference>
<reference key="2">
    <citation type="journal article" date="2011" name="Mol. Cell. Proteomics">
        <title>Proteogenomic analysis of Mycobacterium tuberculosis by high resolution mass spectrometry.</title>
        <authorList>
            <person name="Kelkar D.S."/>
            <person name="Kumar D."/>
            <person name="Kumar P."/>
            <person name="Balakrishnan L."/>
            <person name="Muthusamy B."/>
            <person name="Yadav A.K."/>
            <person name="Shrivastava P."/>
            <person name="Marimuthu A."/>
            <person name="Anand S."/>
            <person name="Sundaram H."/>
            <person name="Kingsbury R."/>
            <person name="Harsha H.C."/>
            <person name="Nair B."/>
            <person name="Prasad T.S."/>
            <person name="Chauhan D.S."/>
            <person name="Katoch K."/>
            <person name="Katoch V.M."/>
            <person name="Kumar P."/>
            <person name="Chaerkady R."/>
            <person name="Ramachandran S."/>
            <person name="Dash D."/>
            <person name="Pandey A."/>
        </authorList>
    </citation>
    <scope>IDENTIFICATION BY MASS SPECTROMETRY [LARGE SCALE ANALYSIS]</scope>
    <source>
        <strain>ATCC 25618 / H37Rv</strain>
    </source>
</reference>
<reference evidence="5" key="3">
    <citation type="journal article" date="2013" name="Biochemistry">
        <title>Characterization of an aldolase-dehydrogenase complex from the cholesterol degradation pathway of Mycobacterium tuberculosis.</title>
        <authorList>
            <person name="Carere J."/>
            <person name="McKenna S.E."/>
            <person name="Kimber M.S."/>
            <person name="Seah S.Y."/>
        </authorList>
    </citation>
    <scope>X-RAY CRYSTALLOGRAPHY (1.93 ANGSTROMS) IN COMPLEX WITH HSAF</scope>
    <scope>FUNCTION</scope>
    <scope>CATALYTIC ACTIVITY</scope>
    <scope>ACTIVITY REGULATION</scope>
    <scope>BIOPHYSICOCHEMICAL PROPERTIES</scope>
    <scope>SUBUNIT</scope>
    <scope>MUTAGENESIS OF SER-41</scope>
    <source>
        <strain>H37Rv</strain>
    </source>
</reference>
<name>ACDH_MYCTU</name>
<sequence length="303" mass="32009">MPSKAKVAIVGSGNISTDLLYKLLRSEWLEPRWMVGIDPESDGLARAAKLGLETTHEGVDWLLAQPDKPDLVFEATSAYVHRDAAPKYAEAGIRAIDLTPAAVGPAVIPPANLREHLDAPNVNMITCGGQATIPIVYAVSRIVEVPYAEIVASVASVSAGPGTRANIDEFTKTTARGVQTIGGAARGKAIIILNPADPPMIMRDTIFCAIPTDADREAIAASIHDVVKEVQTYVPGYRLLNEPQFDEPSINSGGQALVTTFVEVEGAGDYLPPYAGNLDIMTAAATKVGEEIAKETLVVGGAR</sequence>
<protein>
    <recommendedName>
        <fullName evidence="4">Propanal dehydrogenase (CoA-propanoylating)</fullName>
        <ecNumber evidence="2">1.2.1.87</ecNumber>
    </recommendedName>
    <alternativeName>
        <fullName evidence="1">Acetaldehyde dehydrogenase</fullName>
        <ecNumber evidence="1 2">1.2.1.10</ecNumber>
    </alternativeName>
    <alternativeName>
        <fullName evidence="1">Acetaldehyde dehydrogenase [acetylating]</fullName>
    </alternativeName>
</protein>
<keyword id="KW-0002">3D-structure</keyword>
<keyword id="KW-0058">Aromatic hydrocarbons catabolism</keyword>
<keyword id="KW-0520">NAD</keyword>
<keyword id="KW-0560">Oxidoreductase</keyword>
<keyword id="KW-1185">Reference proteome</keyword>
<comment type="function">
    <text evidence="2">Involved in cholesterol degradation. Catalyzes the conversion of propanal to propanoyl-CoA, using NAD(+) and coenzyme A. Has a broad substrate specificity, and can also use acetaldehyde, butyrlaldehyde, isobutyrlaldehyde and pentaldehyde as substrates.</text>
</comment>
<comment type="catalytic activity">
    <reaction evidence="2">
        <text>propanal + NAD(+) + CoA = propanoyl-CoA + NADH + H(+)</text>
        <dbReference type="Rhea" id="RHEA:36027"/>
        <dbReference type="ChEBI" id="CHEBI:15378"/>
        <dbReference type="ChEBI" id="CHEBI:17153"/>
        <dbReference type="ChEBI" id="CHEBI:57287"/>
        <dbReference type="ChEBI" id="CHEBI:57392"/>
        <dbReference type="ChEBI" id="CHEBI:57540"/>
        <dbReference type="ChEBI" id="CHEBI:57945"/>
        <dbReference type="EC" id="1.2.1.87"/>
    </reaction>
    <physiologicalReaction direction="left-to-right" evidence="2">
        <dbReference type="Rhea" id="RHEA:36028"/>
    </physiologicalReaction>
</comment>
<comment type="catalytic activity">
    <reaction evidence="1 2">
        <text>acetaldehyde + NAD(+) + CoA = acetyl-CoA + NADH + H(+)</text>
        <dbReference type="Rhea" id="RHEA:23288"/>
        <dbReference type="ChEBI" id="CHEBI:15343"/>
        <dbReference type="ChEBI" id="CHEBI:15378"/>
        <dbReference type="ChEBI" id="CHEBI:57287"/>
        <dbReference type="ChEBI" id="CHEBI:57288"/>
        <dbReference type="ChEBI" id="CHEBI:57540"/>
        <dbReference type="ChEBI" id="CHEBI:57945"/>
        <dbReference type="EC" id="1.2.1.10"/>
    </reaction>
    <physiologicalReaction direction="left-to-right" evidence="2">
        <dbReference type="Rhea" id="RHEA:23289"/>
    </physiologicalReaction>
</comment>
<comment type="activity regulation">
    <text evidence="2">Unlike HsaF, HsaG is active both in the presence and absence of its partner enzyme.</text>
</comment>
<comment type="biophysicochemical properties">
    <kinetics>
        <KM evidence="2">18 mM for acetaldehyde (in the presence of HsaF)</KM>
        <KM evidence="2">21.3 mM for acetaldehyde (in the absence of HsaF)</KM>
        <KM evidence="2">15 mM for propanal (in the presence of HsaF)</KM>
        <KM evidence="2">12.4 mM for propanal (in the absence of HsaF)</KM>
        <KM evidence="2">10.6 mM for butyrlaldehyde (in the presence of HsaF)</KM>
        <KM evidence="2">10 mM for isobutyrlaldehyde (in the presence of HsaF)</KM>
        <KM evidence="2">20 mM for pentaldehyde (in the presence of HsaF)</KM>
        <KM evidence="2">0.04 mM for coenzyme A (in the presence of HsaF)</KM>
        <KM evidence="2">0.415 mM for coenzyme A (in the absence of HsaF)</KM>
        <KM evidence="2">0.022 mM for NAD(+) (in the presence or absence of HsaF)</KM>
        <KM evidence="2">1.4 mM for NADP(+) (in the presence of HsaF)</KM>
        <text evidence="2">kcat is 9.4 sec(-1) with acetaldehyde as substrate (in the presence of HsaF). kcat is 19.0 sec(-1) with acetaldehyde as substrate (in the absence of HsaF). kcat is 11.1 sec(-1) with propanal as substrate (in the presence of HsaF). kcat is 23.8 sec(-1) with propanal as substrate (in the absence of HsaF). kcat is 7.3 sec(-1) with butyrlaldehyde as substrate. kcat is 5.8 sec(-1) with isobutyrlaldehyde as substrate. kcat is 7.8 sec(-1) with pentaldehyde as substrate. kcat is 9.6 sec(-1) with coenzyme A as substrate (in the presence of HsaF). kcat is 15 sec(-1) with coenzyme A as substrate (in the absence of HsaF). kcat is 7.6 sec(-1) with NAD(+) as substrate (in the presence of HsaF). kcat is 3.9 sec(-1) with NAD(+) as substrate (in the absence of HsaF). kcat is 3.4 sec(-1) with NADP(+) as substrate.</text>
    </kinetics>
</comment>
<comment type="subunit">
    <text evidence="2">Monomer. Forms a heterotetramer composed of two aldolase (HsaF) and two dehydrogenase (HsaG) subunits.</text>
</comment>
<comment type="similarity">
    <text evidence="1">Belongs to the acetaldehyde dehydrogenase family.</text>
</comment>
<proteinExistence type="evidence at protein level"/>